<feature type="signal peptide" evidence="1">
    <location>
        <begin position="1"/>
        <end position="26"/>
    </location>
</feature>
<feature type="chain" id="PRO_0000389609" description="Uncharacterized protein YkwD">
    <location>
        <begin position="27"/>
        <end position="257"/>
    </location>
</feature>
<feature type="domain" description="SCP">
    <location>
        <begin position="141"/>
        <end position="254"/>
    </location>
</feature>
<feature type="region of interest" description="Disordered" evidence="2">
    <location>
        <begin position="80"/>
        <end position="135"/>
    </location>
</feature>
<feature type="compositionally biased region" description="Polar residues" evidence="2">
    <location>
        <begin position="121"/>
        <end position="134"/>
    </location>
</feature>
<sequence>MKKAFILSAAAAVGLFTFGGVQQASAKELSCQPVVTVKTGNTVQNMSLNDAVKKLHINTNIKTLNAANEKEMKQLLQKHAKQSNVKVQDVQKTETAKPAQKTTEKAAADQNTASKAPATAEKTNTTTSAPSSVSAYEKKVVELTNAERQKQGLKPLQIDETLSKSARAKSQDMKDKNYFDHQSPTYGSPFDMMKSFGISYKTAGENIAKGQKTPEEVVKAWMNSEGHRKNILNPNFTHIGVGYVESGSIWTQQFIGK</sequence>
<reference key="1">
    <citation type="submission" date="1997-11" db="EMBL/GenBank/DDBJ databases">
        <title>Sequence of the Bacillus subtilis chromosome from ykuA to cse-15.</title>
        <authorList>
            <person name="Scanlan E."/>
            <person name="Devine K.M."/>
        </authorList>
    </citation>
    <scope>NUCLEOTIDE SEQUENCE [GENOMIC DNA]</scope>
    <source>
        <strain>168</strain>
    </source>
</reference>
<reference key="2">
    <citation type="journal article" date="1997" name="Nature">
        <title>The complete genome sequence of the Gram-positive bacterium Bacillus subtilis.</title>
        <authorList>
            <person name="Kunst F."/>
            <person name="Ogasawara N."/>
            <person name="Moszer I."/>
            <person name="Albertini A.M."/>
            <person name="Alloni G."/>
            <person name="Azevedo V."/>
            <person name="Bertero M.G."/>
            <person name="Bessieres P."/>
            <person name="Bolotin A."/>
            <person name="Borchert S."/>
            <person name="Borriss R."/>
            <person name="Boursier L."/>
            <person name="Brans A."/>
            <person name="Braun M."/>
            <person name="Brignell S.C."/>
            <person name="Bron S."/>
            <person name="Brouillet S."/>
            <person name="Bruschi C.V."/>
            <person name="Caldwell B."/>
            <person name="Capuano V."/>
            <person name="Carter N.M."/>
            <person name="Choi S.-K."/>
            <person name="Codani J.-J."/>
            <person name="Connerton I.F."/>
            <person name="Cummings N.J."/>
            <person name="Daniel R.A."/>
            <person name="Denizot F."/>
            <person name="Devine K.M."/>
            <person name="Duesterhoeft A."/>
            <person name="Ehrlich S.D."/>
            <person name="Emmerson P.T."/>
            <person name="Entian K.-D."/>
            <person name="Errington J."/>
            <person name="Fabret C."/>
            <person name="Ferrari E."/>
            <person name="Foulger D."/>
            <person name="Fritz C."/>
            <person name="Fujita M."/>
            <person name="Fujita Y."/>
            <person name="Fuma S."/>
            <person name="Galizzi A."/>
            <person name="Galleron N."/>
            <person name="Ghim S.-Y."/>
            <person name="Glaser P."/>
            <person name="Goffeau A."/>
            <person name="Golightly E.J."/>
            <person name="Grandi G."/>
            <person name="Guiseppi G."/>
            <person name="Guy B.J."/>
            <person name="Haga K."/>
            <person name="Haiech J."/>
            <person name="Harwood C.R."/>
            <person name="Henaut A."/>
            <person name="Hilbert H."/>
            <person name="Holsappel S."/>
            <person name="Hosono S."/>
            <person name="Hullo M.-F."/>
            <person name="Itaya M."/>
            <person name="Jones L.-M."/>
            <person name="Joris B."/>
            <person name="Karamata D."/>
            <person name="Kasahara Y."/>
            <person name="Klaerr-Blanchard M."/>
            <person name="Klein C."/>
            <person name="Kobayashi Y."/>
            <person name="Koetter P."/>
            <person name="Koningstein G."/>
            <person name="Krogh S."/>
            <person name="Kumano M."/>
            <person name="Kurita K."/>
            <person name="Lapidus A."/>
            <person name="Lardinois S."/>
            <person name="Lauber J."/>
            <person name="Lazarevic V."/>
            <person name="Lee S.-M."/>
            <person name="Levine A."/>
            <person name="Liu H."/>
            <person name="Masuda S."/>
            <person name="Mauel C."/>
            <person name="Medigue C."/>
            <person name="Medina N."/>
            <person name="Mellado R.P."/>
            <person name="Mizuno M."/>
            <person name="Moestl D."/>
            <person name="Nakai S."/>
            <person name="Noback M."/>
            <person name="Noone D."/>
            <person name="O'Reilly M."/>
            <person name="Ogawa K."/>
            <person name="Ogiwara A."/>
            <person name="Oudega B."/>
            <person name="Park S.-H."/>
            <person name="Parro V."/>
            <person name="Pohl T.M."/>
            <person name="Portetelle D."/>
            <person name="Porwollik S."/>
            <person name="Prescott A.M."/>
            <person name="Presecan E."/>
            <person name="Pujic P."/>
            <person name="Purnelle B."/>
            <person name="Rapoport G."/>
            <person name="Rey M."/>
            <person name="Reynolds S."/>
            <person name="Rieger M."/>
            <person name="Rivolta C."/>
            <person name="Rocha E."/>
            <person name="Roche B."/>
            <person name="Rose M."/>
            <person name="Sadaie Y."/>
            <person name="Sato T."/>
            <person name="Scanlan E."/>
            <person name="Schleich S."/>
            <person name="Schroeter R."/>
            <person name="Scoffone F."/>
            <person name="Sekiguchi J."/>
            <person name="Sekowska A."/>
            <person name="Seror S.J."/>
            <person name="Serror P."/>
            <person name="Shin B.-S."/>
            <person name="Soldo B."/>
            <person name="Sorokin A."/>
            <person name="Tacconi E."/>
            <person name="Takagi T."/>
            <person name="Takahashi H."/>
            <person name="Takemaru K."/>
            <person name="Takeuchi M."/>
            <person name="Tamakoshi A."/>
            <person name="Tanaka T."/>
            <person name="Terpstra P."/>
            <person name="Tognoni A."/>
            <person name="Tosato V."/>
            <person name="Uchiyama S."/>
            <person name="Vandenbol M."/>
            <person name="Vannier F."/>
            <person name="Vassarotti A."/>
            <person name="Viari A."/>
            <person name="Wambutt R."/>
            <person name="Wedler E."/>
            <person name="Wedler H."/>
            <person name="Weitzenegger T."/>
            <person name="Winters P."/>
            <person name="Wipat A."/>
            <person name="Yamamoto H."/>
            <person name="Yamane K."/>
            <person name="Yasumoto K."/>
            <person name="Yata K."/>
            <person name="Yoshida K."/>
            <person name="Yoshikawa H.-F."/>
            <person name="Zumstein E."/>
            <person name="Yoshikawa H."/>
            <person name="Danchin A."/>
        </authorList>
    </citation>
    <scope>NUCLEOTIDE SEQUENCE [LARGE SCALE GENOMIC DNA]</scope>
    <source>
        <strain>168</strain>
    </source>
</reference>
<reference key="3">
    <citation type="journal article" date="2009" name="Microbiology">
        <title>From a consortium sequence to a unified sequence: the Bacillus subtilis 168 reference genome a decade later.</title>
        <authorList>
            <person name="Barbe V."/>
            <person name="Cruveiller S."/>
            <person name="Kunst F."/>
            <person name="Lenoble P."/>
            <person name="Meurice G."/>
            <person name="Sekowska A."/>
            <person name="Vallenet D."/>
            <person name="Wang T."/>
            <person name="Moszer I."/>
            <person name="Medigue C."/>
            <person name="Danchin A."/>
        </authorList>
    </citation>
    <scope>SEQUENCE REVISION TO 41</scope>
</reference>
<proteinExistence type="inferred from homology"/>
<organism>
    <name type="scientific">Bacillus subtilis (strain 168)</name>
    <dbReference type="NCBI Taxonomy" id="224308"/>
    <lineage>
        <taxon>Bacteria</taxon>
        <taxon>Bacillati</taxon>
        <taxon>Bacillota</taxon>
        <taxon>Bacilli</taxon>
        <taxon>Bacillales</taxon>
        <taxon>Bacillaceae</taxon>
        <taxon>Bacillus</taxon>
    </lineage>
</organism>
<accession>O31398</accession>
<accession>O31694</accession>
<gene>
    <name type="primary">ykwD</name>
    <name type="ordered locus">BSU13970</name>
</gene>
<keyword id="KW-1185">Reference proteome</keyword>
<keyword id="KW-0732">Signal</keyword>
<name>YKWD_BACSU</name>
<dbReference type="EMBL" id="AJ222587">
    <property type="protein sequence ID" value="CAA10860.1"/>
    <property type="molecule type" value="Genomic_DNA"/>
</dbReference>
<dbReference type="EMBL" id="AL009126">
    <property type="protein sequence ID" value="CAB13270.2"/>
    <property type="molecule type" value="Genomic_DNA"/>
</dbReference>
<dbReference type="RefSeq" id="NP_389280.2">
    <property type="nucleotide sequence ID" value="NC_000964.3"/>
</dbReference>
<dbReference type="RefSeq" id="WP_003244693.1">
    <property type="nucleotide sequence ID" value="NZ_OZ025638.1"/>
</dbReference>
<dbReference type="SMR" id="O31398"/>
<dbReference type="FunCoup" id="O31398">
    <property type="interactions" value="24"/>
</dbReference>
<dbReference type="STRING" id="224308.BSU13970"/>
<dbReference type="PaxDb" id="224308-BSU13970"/>
<dbReference type="EnsemblBacteria" id="CAB13270">
    <property type="protein sequence ID" value="CAB13270"/>
    <property type="gene ID" value="BSU_13970"/>
</dbReference>
<dbReference type="GeneID" id="939237"/>
<dbReference type="KEGG" id="bsu:BSU13970"/>
<dbReference type="PATRIC" id="fig|224308.179.peg.1523"/>
<dbReference type="eggNOG" id="COG2340">
    <property type="taxonomic scope" value="Bacteria"/>
</dbReference>
<dbReference type="InParanoid" id="O31398"/>
<dbReference type="OrthoDB" id="9783944at2"/>
<dbReference type="PhylomeDB" id="O31398"/>
<dbReference type="BioCyc" id="BSUB:BSU13970-MONOMER"/>
<dbReference type="Proteomes" id="UP000001570">
    <property type="component" value="Chromosome"/>
</dbReference>
<dbReference type="CDD" id="cd05379">
    <property type="entry name" value="CAP_bacterial"/>
    <property type="match status" value="1"/>
</dbReference>
<dbReference type="Gene3D" id="3.40.33.10">
    <property type="entry name" value="CAP"/>
    <property type="match status" value="1"/>
</dbReference>
<dbReference type="InterPro" id="IPR014044">
    <property type="entry name" value="CAP_dom"/>
</dbReference>
<dbReference type="InterPro" id="IPR014258">
    <property type="entry name" value="CAP_domain_YkwD-like"/>
</dbReference>
<dbReference type="InterPro" id="IPR035940">
    <property type="entry name" value="CAP_sf"/>
</dbReference>
<dbReference type="NCBIfam" id="TIGR02909">
    <property type="entry name" value="spore_YkwD"/>
    <property type="match status" value="1"/>
</dbReference>
<dbReference type="PANTHER" id="PTHR31157">
    <property type="entry name" value="SCP DOMAIN-CONTAINING PROTEIN"/>
    <property type="match status" value="1"/>
</dbReference>
<dbReference type="PANTHER" id="PTHR31157:SF1">
    <property type="entry name" value="SCP DOMAIN-CONTAINING PROTEIN"/>
    <property type="match status" value="1"/>
</dbReference>
<dbReference type="Pfam" id="PF00188">
    <property type="entry name" value="CAP"/>
    <property type="match status" value="1"/>
</dbReference>
<dbReference type="SUPFAM" id="SSF55797">
    <property type="entry name" value="PR-1-like"/>
    <property type="match status" value="1"/>
</dbReference>
<evidence type="ECO:0000255" key="1"/>
<evidence type="ECO:0000256" key="2">
    <source>
        <dbReference type="SAM" id="MobiDB-lite"/>
    </source>
</evidence>
<protein>
    <recommendedName>
        <fullName>Uncharacterized protein YkwD</fullName>
    </recommendedName>
</protein>